<comment type="function">
    <text evidence="2 3 4 5 6 7 9">Synthetic multivulva class B (synMuvB) protein (PubMed:11463372, PubMed:17075059). SynMuvB proteins are required to repress the induction of vulval development by Ras signaling and probably act by forming the multiprotein DRM complex that represses transcription (PubMed:11463372, PubMed:17075059). May also negatively regulate vulval development in association with other SynMuv class B proteins such as lin-15A (PubMed:11463372). Can stimulate E2F-dependent transcription (PubMed:17075059). Plays a role in negatively regulating the progression through the G1 phase of the cell cycle during postembryonic development, most likely by acting as a transcriptional repressor in association with the cell cycle regulatory factor efl-1 and the transcriptional repressor lin-35, but may also act as a positive regulator of cell cycle entry (PubMed:12062054). Involved in the regulation of intestinal cell division during postembryonic development, most likely in complex with efl-1 and lin-35 (PubMed:17466069). Promotes germ cell programmed cell death, probably together with efl-1, by positively regulating the expression of the apoptosis proteins ced-3 and ced-4 (PubMed:17881492, PubMed:24752899). In particular, positively regulates the expression of ced-4 in response to starvation (PubMed:24752899). Its role in programmed cell death may be in conjunction with cell cycle regulatory factor efl-1 and the synthetic multivulva class B proteins lin-35, lin-37 and lin-52, and is independent of the ced-1, ced-8 and ced-9 pathways (PubMed:17237514).</text>
</comment>
<comment type="subunit">
    <text evidence="2 4">Component of the DRM complex, at least composed of lin-9, lin-35, lin-37, lin-52, lin-53, lin-54- dpl-1 and efl-1 (PubMed:17075059). Interacts (via N-terminus) with efl-1 (PubMed:11463372). Interacts (via C-terminus) with lin-35 (via C-terminus) (PubMed:11463372).</text>
</comment>
<comment type="interaction">
    <interactant intactId="EBI-324825">
        <id>Q22703</id>
    </interactant>
    <interactant intactId="EBI-331564">
        <id>G5EF11</id>
        <label>efl-1</label>
    </interactant>
    <organismsDiffer>false</organismsDiffer>
    <experiments>2</experiments>
</comment>
<comment type="interaction">
    <interactant intactId="EBI-324825">
        <id>Q22703</id>
    </interactant>
    <interactant intactId="EBI-321470">
        <id>G5EDT1</id>
        <label>lin-35</label>
    </interactant>
    <organismsDiffer>false</organismsDiffer>
    <experiments>2</experiments>
</comment>
<comment type="subcellular location">
    <subcellularLocation>
        <location evidence="2 8">Nucleus</location>
    </subcellularLocation>
</comment>
<comment type="developmental stage">
    <text evidence="2">Expressed throughout development. Highly expressed in somatic nuclei, as well as in immature germ cell and oocyte nuclei.</text>
</comment>
<comment type="disruption phenotype">
    <text evidence="2 3 5">Uncoordinated movements, also known as an Unc phenotype, most likely due to defective cell cycle progression defects in the Pn.a neuroblast lineage (PubMed:11463372). No obvious vulval development defects (PubMed:11463372). Programmed cell death defect in a ced-3 n2427 mutant background (PubMed:17237514). Double knockout with the n433 mutant of the synthetic multivulva class A protein lin-15A results in a multiple vulva (Muv) phenotype (PubMed:11463372). RNAi-mediated knockdown results in reduced postembryonic intestinal cell divisions (PubMed:12062054).</text>
</comment>
<comment type="similarity">
    <text evidence="11">Belongs to the E2F/DP family.</text>
</comment>
<reference key="1">
    <citation type="journal article" date="2001" name="Mol. Cell">
        <title>dpl-1 DP and efl-1 E2F act with lin-35 Rb to antagonize Ras signaling in C.elegans vulval development.</title>
        <authorList>
            <person name="Ceol C.J."/>
            <person name="Horvitz H.R."/>
        </authorList>
    </citation>
    <scope>NUCLEOTIDE SEQUENCE [MRNA]</scope>
    <scope>FUNCTION</scope>
    <scope>INTERACTION WITH EFL-1 AND LIN-35</scope>
    <scope>SUBCELLULAR LOCATION</scope>
    <scope>DEVELOPMENTAL STAGE</scope>
    <scope>DISRUPTION PHENOTYPE</scope>
</reference>
<reference key="2">
    <citation type="journal article" date="1998" name="Science">
        <title>Genome sequence of the nematode C. elegans: a platform for investigating biology.</title>
        <authorList>
            <consortium name="The C. elegans sequencing consortium"/>
        </authorList>
    </citation>
    <scope>NUCLEOTIDE SEQUENCE [LARGE SCALE GENOMIC DNA]</scope>
    <source>
        <strain>Bristol N2</strain>
    </source>
</reference>
<reference key="3">
    <citation type="journal article" date="2002" name="Curr. Biol.">
        <title>C. elegans class B synthetic multivulva genes act in G(1) regulation.</title>
        <authorList>
            <person name="Boxem M."/>
            <person name="van den Heuvel S."/>
        </authorList>
    </citation>
    <scope>FUNCTION</scope>
    <scope>DISRUPTION PHENOTYPE</scope>
</reference>
<reference key="4">
    <citation type="journal article" date="2006" name="Proc. Natl. Acad. Sci. U.S.A.">
        <title>Some C. elegans class B synthetic multivulva proteins encode a conserved LIN-35 Rb-containing complex distinct from a NuRD-like complex.</title>
        <authorList>
            <person name="Harrison M.M."/>
            <person name="Ceol C.J."/>
            <person name="Lu X."/>
            <person name="Horvitz H.R."/>
        </authorList>
    </citation>
    <scope>FUNCTION</scope>
    <scope>IDENTIFICATION IN THE DRM COMPLEX</scope>
</reference>
<reference key="5">
    <citation type="journal article" date="2007" name="BMC Dev. Biol.">
        <title>The lin-35/Rb and RNAi pathways cooperate to regulate a key cell cycle transition in C. elegans.</title>
        <authorList>
            <person name="Ouellet J."/>
            <person name="Roy R."/>
        </authorList>
    </citation>
    <scope>FUNCTION</scope>
</reference>
<reference key="6">
    <citation type="journal article" date="2007" name="Development">
        <title>C. elegans orthologs of components of the RB tumor suppressor complex have distinct pro-apoptotic functions.</title>
        <authorList>
            <person name="Schertel C."/>
            <person name="Conradt B."/>
        </authorList>
    </citation>
    <scope>FUNCTION</scope>
</reference>
<reference key="7">
    <citation type="journal article" date="2007" name="Genetics">
        <title>DPL-1 DP, LIN-35 Rb and EFL-1 E2F act with the MCD-1 zinc-finger protein to promote programmed cell death in Caenorhabditis elegans.</title>
        <authorList>
            <person name="Reddien P.W."/>
            <person name="Andersen E.C."/>
            <person name="Huang M.C."/>
            <person name="Horvitz H.R."/>
        </authorList>
    </citation>
    <scope>FUNCTION</scope>
    <scope>DISRUPTION PHENOTYPE</scope>
</reference>
<reference key="8">
    <citation type="journal article" date="2013" name="Genome Biol.">
        <title>Tissue-specific direct targets of Caenorhabditis elegans Rb/E2F dictate distinct somatic and germline programs.</title>
        <authorList>
            <person name="Kudron M."/>
            <person name="Niu W."/>
            <person name="Lu Z."/>
            <person name="Wang G."/>
            <person name="Gerstein M."/>
            <person name="Snyder M."/>
            <person name="Reinke V."/>
        </authorList>
    </citation>
    <scope>SUBCELLULAR LOCATION</scope>
</reference>
<reference key="9">
    <citation type="journal article" date="2014" name="Mol. Cell. Biol.">
        <title>LIN-35/Rb causes starvation-induced germ cell apoptosis via CED-9/Bcl2 downregulation in Caenorhabditis elegans.</title>
        <authorList>
            <person name="Lascarez-Lagunas L.I."/>
            <person name="Silva-Garcia C.G."/>
            <person name="Dinkova T.D."/>
            <person name="Navarro R.E."/>
        </authorList>
    </citation>
    <scope>FUNCTION</scope>
</reference>
<name>TFDP1_CAEEL</name>
<proteinExistence type="evidence at protein level"/>
<keyword id="KW-0238">DNA-binding</keyword>
<keyword id="KW-0539">Nucleus</keyword>
<keyword id="KW-1185">Reference proteome</keyword>
<keyword id="KW-0804">Transcription</keyword>
<keyword id="KW-0805">Transcription regulation</keyword>
<sequence>MNPTNYDPRIGQPAQSRPQVSLSMGRRIVQMPTGLPRSYQDESHNEPVGWDEPSGVGGSSGAGGQQSDKPTGLRHFSTKVCEKVKEKGLTNYNEVADELVADYFQNNLIKQIDVVKQEYDMKNIRRRVYDALNVLLAMNIITKSKKDIRWIGLPASASQEISRLEEEKSRREASISSKKQALEEMVLQIVSYKNLVERNRKNEHKNGRPENDTVLHLPFLIINTDKEANVECSVSSDKSEFLFSFDKKFEIHDDFEILKKLNLACSLETTNPTAEEVKTAKSFLPTLHQHYVDEIIANRKKVEAEKEEKRKQQQLIADQMSMNLSQAQYVEPTSSLAQMSYSSRFNRQLQEHLINDGSEDRSAAAGIMERDYDMDKNVNQGSASRGPMYNTYSPQKIRAQVNTPLQVPPVTKRYYVQKTQGPMKHDMTPVVRTVNRPYSTVPPDRRLSTGATSVNSGPVKYYVPQGHQPMHQPVGQRYRVRPQQPQMSHMGQPHQVQQRVVYPAGSISGHQLQPGQRIVTQRIVAPGGPHPPGTIVRKVIRKIVVNNPKQSPAQQVIQKKMMEQDMCTFERKTEQPMTSAQAAALIQHPQPEEYDYFQ</sequence>
<feature type="chain" id="PRO_0000219480" description="Transcription factor dpl-1">
    <location>
        <begin position="1"/>
        <end position="598"/>
    </location>
</feature>
<feature type="region of interest" description="Disordered" evidence="1">
    <location>
        <begin position="1"/>
        <end position="73"/>
    </location>
</feature>
<feature type="region of interest" description="Disordered" evidence="1">
    <location>
        <begin position="435"/>
        <end position="457"/>
    </location>
</feature>
<feature type="region of interest" description="Disordered" evidence="1">
    <location>
        <begin position="573"/>
        <end position="598"/>
    </location>
</feature>
<feature type="compositionally biased region" description="Polar residues" evidence="1">
    <location>
        <begin position="13"/>
        <end position="22"/>
    </location>
</feature>
<feature type="compositionally biased region" description="Gly residues" evidence="1">
    <location>
        <begin position="55"/>
        <end position="64"/>
    </location>
</feature>
<dbReference type="EMBL" id="AY028165">
    <property type="protein sequence ID" value="AAK19021.1"/>
    <property type="molecule type" value="mRNA"/>
</dbReference>
<dbReference type="EMBL" id="Z68319">
    <property type="protein sequence ID" value="CAA92699.1"/>
    <property type="molecule type" value="Genomic_DNA"/>
</dbReference>
<dbReference type="PIR" id="T25207">
    <property type="entry name" value="T25207"/>
</dbReference>
<dbReference type="RefSeq" id="NP_495957.1">
    <property type="nucleotide sequence ID" value="NM_063556.8"/>
</dbReference>
<dbReference type="SMR" id="Q22703"/>
<dbReference type="BioGRID" id="39783">
    <property type="interactions" value="19"/>
</dbReference>
<dbReference type="ComplexPortal" id="CPX-1100">
    <property type="entry name" value="DRM complex"/>
</dbReference>
<dbReference type="ComplexPortal" id="CPX-1138">
    <property type="entry name" value="RB1-E2F1-TFDP1 transcription repressor complex"/>
</dbReference>
<dbReference type="ComplexPortal" id="CPX-1145">
    <property type="entry name" value="E2F2-DP1 transcription factor complex"/>
</dbReference>
<dbReference type="ComplexPortal" id="CPX-1146">
    <property type="entry name" value="RB1-E2F2-TFDP1 transcription repressor complex"/>
</dbReference>
<dbReference type="ComplexPortal" id="CPX-965">
    <property type="entry name" value="E2F1-DP1 transcription factor complex"/>
</dbReference>
<dbReference type="DIP" id="DIP-26129N"/>
<dbReference type="FunCoup" id="Q22703">
    <property type="interactions" value="633"/>
</dbReference>
<dbReference type="IntAct" id="Q22703">
    <property type="interactions" value="10"/>
</dbReference>
<dbReference type="MINT" id="Q22703"/>
<dbReference type="STRING" id="6239.T23G7.1.1"/>
<dbReference type="iPTMnet" id="Q22703"/>
<dbReference type="PaxDb" id="6239-T23G7.1"/>
<dbReference type="PeptideAtlas" id="Q22703"/>
<dbReference type="EnsemblMetazoa" id="T23G7.1.1">
    <property type="protein sequence ID" value="T23G7.1.1"/>
    <property type="gene ID" value="WBGene00001061"/>
</dbReference>
<dbReference type="EnsemblMetazoa" id="T23G7.1.2">
    <property type="protein sequence ID" value="T23G7.1.2"/>
    <property type="gene ID" value="WBGene00001061"/>
</dbReference>
<dbReference type="GeneID" id="174458"/>
<dbReference type="KEGG" id="cel:CELE_T23G7.1"/>
<dbReference type="UCSC" id="T23G7.1">
    <property type="organism name" value="c. elegans"/>
</dbReference>
<dbReference type="AGR" id="WB:WBGene00001061"/>
<dbReference type="CTD" id="174458"/>
<dbReference type="WormBase" id="T23G7.1">
    <property type="protein sequence ID" value="CE21197"/>
    <property type="gene ID" value="WBGene00001061"/>
    <property type="gene designation" value="dpl-1"/>
</dbReference>
<dbReference type="eggNOG" id="KOG2829">
    <property type="taxonomic scope" value="Eukaryota"/>
</dbReference>
<dbReference type="GeneTree" id="ENSGT00940000169233"/>
<dbReference type="HOGENOM" id="CLU_464018_0_0_1"/>
<dbReference type="InParanoid" id="Q22703"/>
<dbReference type="OMA" id="DIRWIGL"/>
<dbReference type="OrthoDB" id="552115at2759"/>
<dbReference type="Reactome" id="R-CEL-1538133">
    <property type="pathway name" value="G0 and Early G1"/>
</dbReference>
<dbReference type="Reactome" id="R-CEL-2173796">
    <property type="pathway name" value="SMAD2/SMAD3:SMAD4 heterotrimer regulates transcription"/>
</dbReference>
<dbReference type="SignaLink" id="Q22703"/>
<dbReference type="PRO" id="PR:Q22703"/>
<dbReference type="Proteomes" id="UP000001940">
    <property type="component" value="Chromosome II"/>
</dbReference>
<dbReference type="Bgee" id="WBGene00001061">
    <property type="expression patterns" value="Expressed in embryo and 5 other cell types or tissues"/>
</dbReference>
<dbReference type="GO" id="GO:0070176">
    <property type="term" value="C:DRM complex"/>
    <property type="evidence" value="ECO:0000314"/>
    <property type="project" value="ComplexPortal"/>
</dbReference>
<dbReference type="GO" id="GO:0005634">
    <property type="term" value="C:nucleus"/>
    <property type="evidence" value="ECO:0000314"/>
    <property type="project" value="WormBase"/>
</dbReference>
<dbReference type="GO" id="GO:0035189">
    <property type="term" value="C:Rb-E2F complex"/>
    <property type="evidence" value="ECO:0000314"/>
    <property type="project" value="ComplexPortal"/>
</dbReference>
<dbReference type="GO" id="GO:0090575">
    <property type="term" value="C:RNA polymerase II transcription regulator complex"/>
    <property type="evidence" value="ECO:0000303"/>
    <property type="project" value="ComplexPortal"/>
</dbReference>
<dbReference type="GO" id="GO:0003677">
    <property type="term" value="F:DNA binding"/>
    <property type="evidence" value="ECO:0007669"/>
    <property type="project" value="UniProtKB-KW"/>
</dbReference>
<dbReference type="GO" id="GO:0000981">
    <property type="term" value="F:DNA-binding transcription factor activity, RNA polymerase II-specific"/>
    <property type="evidence" value="ECO:0000318"/>
    <property type="project" value="GO_Central"/>
</dbReference>
<dbReference type="GO" id="GO:0061629">
    <property type="term" value="F:RNA polymerase II-specific DNA-binding transcription factor binding"/>
    <property type="evidence" value="ECO:0000353"/>
    <property type="project" value="WormBase"/>
</dbReference>
<dbReference type="GO" id="GO:0008406">
    <property type="term" value="P:gonad development"/>
    <property type="evidence" value="ECO:0000316"/>
    <property type="project" value="UniProtKB"/>
</dbReference>
<dbReference type="GO" id="GO:0046580">
    <property type="term" value="P:negative regulation of Ras protein signal transduction"/>
    <property type="evidence" value="ECO:0000315"/>
    <property type="project" value="WormBase"/>
</dbReference>
<dbReference type="GO" id="GO:0040027">
    <property type="term" value="P:negative regulation of vulval development"/>
    <property type="evidence" value="ECO:0000314"/>
    <property type="project" value="ComplexPortal"/>
</dbReference>
<dbReference type="GO" id="GO:0045787">
    <property type="term" value="P:positive regulation of cell cycle"/>
    <property type="evidence" value="ECO:0000315"/>
    <property type="project" value="UniProtKB"/>
</dbReference>
<dbReference type="GO" id="GO:0012501">
    <property type="term" value="P:programmed cell death"/>
    <property type="evidence" value="ECO:0000315"/>
    <property type="project" value="WormBase"/>
</dbReference>
<dbReference type="GO" id="GO:0042981">
    <property type="term" value="P:regulation of apoptotic process"/>
    <property type="evidence" value="ECO:0000303"/>
    <property type="project" value="ComplexPortal"/>
</dbReference>
<dbReference type="GO" id="GO:0051302">
    <property type="term" value="P:regulation of cell division"/>
    <property type="evidence" value="ECO:0000316"/>
    <property type="project" value="UniProtKB"/>
</dbReference>
<dbReference type="GO" id="GO:0042659">
    <property type="term" value="P:regulation of cell fate specification"/>
    <property type="evidence" value="ECO:0000315"/>
    <property type="project" value="WormBase"/>
</dbReference>
<dbReference type="GO" id="GO:0046599">
    <property type="term" value="P:regulation of centriole replication"/>
    <property type="evidence" value="ECO:0000303"/>
    <property type="project" value="ComplexPortal"/>
</dbReference>
<dbReference type="GO" id="GO:0006355">
    <property type="term" value="P:regulation of DNA-templated transcription"/>
    <property type="evidence" value="ECO:0000315"/>
    <property type="project" value="ComplexPortal"/>
</dbReference>
<dbReference type="GO" id="GO:0006357">
    <property type="term" value="P:regulation of transcription by RNA polymerase II"/>
    <property type="evidence" value="ECO:0000318"/>
    <property type="project" value="GO_Central"/>
</dbReference>
<dbReference type="CDD" id="cd14458">
    <property type="entry name" value="DP_DD"/>
    <property type="match status" value="1"/>
</dbReference>
<dbReference type="FunFam" id="1.10.10.10:FF:000360">
    <property type="entry name" value="Transcription factor Dp-1, a"/>
    <property type="match status" value="1"/>
</dbReference>
<dbReference type="Gene3D" id="1.20.140.80">
    <property type="entry name" value="Transcription factor DP"/>
    <property type="match status" value="1"/>
</dbReference>
<dbReference type="Gene3D" id="1.10.10.10">
    <property type="entry name" value="Winged helix-like DNA-binding domain superfamily/Winged helix DNA-binding domain"/>
    <property type="match status" value="1"/>
</dbReference>
<dbReference type="InterPro" id="IPR037241">
    <property type="entry name" value="E2F-DP_heterodim"/>
</dbReference>
<dbReference type="InterPro" id="IPR003316">
    <property type="entry name" value="E2F_WHTH_DNA-bd_dom"/>
</dbReference>
<dbReference type="InterPro" id="IPR038168">
    <property type="entry name" value="TF_DP_C_sf"/>
</dbReference>
<dbReference type="InterPro" id="IPR014889">
    <property type="entry name" value="Transc_factor_DP_C"/>
</dbReference>
<dbReference type="InterPro" id="IPR015648">
    <property type="entry name" value="Transcrpt_fac_DP"/>
</dbReference>
<dbReference type="InterPro" id="IPR036388">
    <property type="entry name" value="WH-like_DNA-bd_sf"/>
</dbReference>
<dbReference type="InterPro" id="IPR036390">
    <property type="entry name" value="WH_DNA-bd_sf"/>
</dbReference>
<dbReference type="PANTHER" id="PTHR12548">
    <property type="entry name" value="TRANSCRIPTION FACTOR DP"/>
    <property type="match status" value="1"/>
</dbReference>
<dbReference type="PANTHER" id="PTHR12548:SF9">
    <property type="entry name" value="TRANSCRIPTION FACTOR DP"/>
    <property type="match status" value="1"/>
</dbReference>
<dbReference type="Pfam" id="PF08781">
    <property type="entry name" value="DP"/>
    <property type="match status" value="1"/>
</dbReference>
<dbReference type="Pfam" id="PF02319">
    <property type="entry name" value="E2F_TDP"/>
    <property type="match status" value="1"/>
</dbReference>
<dbReference type="SMART" id="SM01138">
    <property type="entry name" value="DP"/>
    <property type="match status" value="1"/>
</dbReference>
<dbReference type="SMART" id="SM01372">
    <property type="entry name" value="E2F_TDP"/>
    <property type="match status" value="1"/>
</dbReference>
<dbReference type="SUPFAM" id="SSF144074">
    <property type="entry name" value="E2F-DP heterodimerization region"/>
    <property type="match status" value="1"/>
</dbReference>
<dbReference type="SUPFAM" id="SSF46785">
    <property type="entry name" value="Winged helix' DNA-binding domain"/>
    <property type="match status" value="1"/>
</dbReference>
<protein>
    <recommendedName>
        <fullName>Transcription factor dpl-1</fullName>
    </recommendedName>
</protein>
<evidence type="ECO:0000256" key="1">
    <source>
        <dbReference type="SAM" id="MobiDB-lite"/>
    </source>
</evidence>
<evidence type="ECO:0000269" key="2">
    <source>
    </source>
</evidence>
<evidence type="ECO:0000269" key="3">
    <source>
    </source>
</evidence>
<evidence type="ECO:0000269" key="4">
    <source>
    </source>
</evidence>
<evidence type="ECO:0000269" key="5">
    <source>
    </source>
</evidence>
<evidence type="ECO:0000269" key="6">
    <source>
    </source>
</evidence>
<evidence type="ECO:0000269" key="7">
    <source>
    </source>
</evidence>
<evidence type="ECO:0000269" key="8">
    <source>
    </source>
</evidence>
<evidence type="ECO:0000269" key="9">
    <source>
    </source>
</evidence>
<evidence type="ECO:0000303" key="10">
    <source>
    </source>
</evidence>
<evidence type="ECO:0000305" key="11"/>
<evidence type="ECO:0000312" key="12">
    <source>
        <dbReference type="WormBase" id="T23G7.1"/>
    </source>
</evidence>
<gene>
    <name evidence="10 12" type="primary">dpl-1</name>
    <name evidence="12" type="ORF">T23G7.1</name>
</gene>
<organism>
    <name type="scientific">Caenorhabditis elegans</name>
    <dbReference type="NCBI Taxonomy" id="6239"/>
    <lineage>
        <taxon>Eukaryota</taxon>
        <taxon>Metazoa</taxon>
        <taxon>Ecdysozoa</taxon>
        <taxon>Nematoda</taxon>
        <taxon>Chromadorea</taxon>
        <taxon>Rhabditida</taxon>
        <taxon>Rhabditina</taxon>
        <taxon>Rhabditomorpha</taxon>
        <taxon>Rhabditoidea</taxon>
        <taxon>Rhabditidae</taxon>
        <taxon>Peloderinae</taxon>
        <taxon>Caenorhabditis</taxon>
    </lineage>
</organism>
<accession>Q22703</accession>